<name>THIC_BARBK</name>
<evidence type="ECO:0000255" key="1">
    <source>
        <dbReference type="HAMAP-Rule" id="MF_00089"/>
    </source>
</evidence>
<protein>
    <recommendedName>
        <fullName evidence="1">Phosphomethylpyrimidine synthase</fullName>
        <ecNumber evidence="1">4.1.99.17</ecNumber>
    </recommendedName>
    <alternativeName>
        <fullName evidence="1">Hydroxymethylpyrimidine phosphate synthase</fullName>
        <shortName evidence="1">HMP-P synthase</shortName>
        <shortName evidence="1">HMP-phosphate synthase</shortName>
        <shortName evidence="1">HMPP synthase</shortName>
    </alternativeName>
    <alternativeName>
        <fullName evidence="1">Thiamine biosynthesis protein ThiC</fullName>
    </alternativeName>
</protein>
<comment type="function">
    <text evidence="1">Catalyzes the synthesis of the hydroxymethylpyrimidine phosphate (HMP-P) moiety of thiamine from aminoimidazole ribotide (AIR) in a radical S-adenosyl-L-methionine (SAM)-dependent reaction.</text>
</comment>
<comment type="catalytic activity">
    <reaction evidence="1">
        <text>5-amino-1-(5-phospho-beta-D-ribosyl)imidazole + S-adenosyl-L-methionine = 4-amino-2-methyl-5-(phosphooxymethyl)pyrimidine + CO + 5'-deoxyadenosine + formate + L-methionine + 3 H(+)</text>
        <dbReference type="Rhea" id="RHEA:24840"/>
        <dbReference type="ChEBI" id="CHEBI:15378"/>
        <dbReference type="ChEBI" id="CHEBI:15740"/>
        <dbReference type="ChEBI" id="CHEBI:17245"/>
        <dbReference type="ChEBI" id="CHEBI:17319"/>
        <dbReference type="ChEBI" id="CHEBI:57844"/>
        <dbReference type="ChEBI" id="CHEBI:58354"/>
        <dbReference type="ChEBI" id="CHEBI:59789"/>
        <dbReference type="ChEBI" id="CHEBI:137981"/>
        <dbReference type="EC" id="4.1.99.17"/>
    </reaction>
</comment>
<comment type="cofactor">
    <cofactor evidence="1">
        <name>[4Fe-4S] cluster</name>
        <dbReference type="ChEBI" id="CHEBI:49883"/>
    </cofactor>
    <text evidence="1">Binds 1 [4Fe-4S] cluster per subunit. The cluster is coordinated with 3 cysteines and an exchangeable S-adenosyl-L-methionine.</text>
</comment>
<comment type="pathway">
    <text evidence="1">Cofactor biosynthesis; thiamine diphosphate biosynthesis.</text>
</comment>
<comment type="subunit">
    <text evidence="1">Homodimer.</text>
</comment>
<comment type="similarity">
    <text evidence="1">Belongs to the ThiC family.</text>
</comment>
<accession>A1US11</accession>
<keyword id="KW-0004">4Fe-4S</keyword>
<keyword id="KW-0408">Iron</keyword>
<keyword id="KW-0411">Iron-sulfur</keyword>
<keyword id="KW-0456">Lyase</keyword>
<keyword id="KW-0479">Metal-binding</keyword>
<keyword id="KW-0949">S-adenosyl-L-methionine</keyword>
<keyword id="KW-0784">Thiamine biosynthesis</keyword>
<keyword id="KW-0862">Zinc</keyword>
<feature type="chain" id="PRO_1000004734" description="Phosphomethylpyrimidine synthase">
    <location>
        <begin position="1"/>
        <end position="611"/>
    </location>
</feature>
<feature type="binding site" evidence="1">
    <location>
        <position position="212"/>
    </location>
    <ligand>
        <name>substrate</name>
    </ligand>
</feature>
<feature type="binding site" evidence="1">
    <location>
        <position position="241"/>
    </location>
    <ligand>
        <name>substrate</name>
    </ligand>
</feature>
<feature type="binding site" evidence="1">
    <location>
        <position position="270"/>
    </location>
    <ligand>
        <name>substrate</name>
    </ligand>
</feature>
<feature type="binding site" evidence="1">
    <location>
        <position position="306"/>
    </location>
    <ligand>
        <name>substrate</name>
    </ligand>
</feature>
<feature type="binding site" evidence="1">
    <location>
        <begin position="326"/>
        <end position="328"/>
    </location>
    <ligand>
        <name>substrate</name>
    </ligand>
</feature>
<feature type="binding site" evidence="1">
    <location>
        <begin position="367"/>
        <end position="370"/>
    </location>
    <ligand>
        <name>substrate</name>
    </ligand>
</feature>
<feature type="binding site" evidence="1">
    <location>
        <position position="406"/>
    </location>
    <ligand>
        <name>substrate</name>
    </ligand>
</feature>
<feature type="binding site" evidence="1">
    <location>
        <position position="410"/>
    </location>
    <ligand>
        <name>Zn(2+)</name>
        <dbReference type="ChEBI" id="CHEBI:29105"/>
    </ligand>
</feature>
<feature type="binding site" evidence="1">
    <location>
        <position position="433"/>
    </location>
    <ligand>
        <name>substrate</name>
    </ligand>
</feature>
<feature type="binding site" evidence="1">
    <location>
        <position position="474"/>
    </location>
    <ligand>
        <name>Zn(2+)</name>
        <dbReference type="ChEBI" id="CHEBI:29105"/>
    </ligand>
</feature>
<feature type="binding site" evidence="1">
    <location>
        <position position="554"/>
    </location>
    <ligand>
        <name>[4Fe-4S] cluster</name>
        <dbReference type="ChEBI" id="CHEBI:49883"/>
        <note>4Fe-4S-S-AdoMet</note>
    </ligand>
</feature>
<feature type="binding site" evidence="1">
    <location>
        <position position="557"/>
    </location>
    <ligand>
        <name>[4Fe-4S] cluster</name>
        <dbReference type="ChEBI" id="CHEBI:49883"/>
        <note>4Fe-4S-S-AdoMet</note>
    </ligand>
</feature>
<feature type="binding site" evidence="1">
    <location>
        <position position="562"/>
    </location>
    <ligand>
        <name>[4Fe-4S] cluster</name>
        <dbReference type="ChEBI" id="CHEBI:49883"/>
        <note>4Fe-4S-S-AdoMet</note>
    </ligand>
</feature>
<proteinExistence type="inferred from homology"/>
<gene>
    <name evidence="1" type="primary">thiC</name>
    <name type="ordered locus">BARBAKC583_0446</name>
</gene>
<reference key="1">
    <citation type="submission" date="2006-12" db="EMBL/GenBank/DDBJ databases">
        <authorList>
            <person name="Hendrix L."/>
            <person name="Mohamoud Y."/>
            <person name="Radune D."/>
            <person name="Shvartsbeyn A."/>
            <person name="Daugherty S."/>
            <person name="Dodson R."/>
            <person name="Durkin A.S."/>
            <person name="Harkins D."/>
            <person name="Huot H."/>
            <person name="Kothari S.P."/>
            <person name="Madupu R."/>
            <person name="Li J."/>
            <person name="Nelson W.C."/>
            <person name="Shrivastava S."/>
            <person name="Giglio M.G."/>
            <person name="Haft D."/>
            <person name="Selengut J."/>
            <person name="Fraser-Ligget C."/>
            <person name="Seshadri R."/>
        </authorList>
    </citation>
    <scope>NUCLEOTIDE SEQUENCE [LARGE SCALE GENOMIC DNA]</scope>
    <source>
        <strain>ATCC 35685 / KC583 / Herrer 020/F12,63</strain>
    </source>
</reference>
<dbReference type="EC" id="4.1.99.17" evidence="1"/>
<dbReference type="EMBL" id="CP000524">
    <property type="protein sequence ID" value="ABM45238.1"/>
    <property type="molecule type" value="Genomic_DNA"/>
</dbReference>
<dbReference type="RefSeq" id="WP_005766492.1">
    <property type="nucleotide sequence ID" value="NC_008783.1"/>
</dbReference>
<dbReference type="SMR" id="A1US11"/>
<dbReference type="STRING" id="360095.BARBAKC583_0446"/>
<dbReference type="GeneID" id="4684433"/>
<dbReference type="KEGG" id="bbk:BARBAKC583_0446"/>
<dbReference type="PATRIC" id="fig|360095.6.peg.428"/>
<dbReference type="eggNOG" id="COG0422">
    <property type="taxonomic scope" value="Bacteria"/>
</dbReference>
<dbReference type="HOGENOM" id="CLU_013181_2_1_5"/>
<dbReference type="OrthoDB" id="9805897at2"/>
<dbReference type="UniPathway" id="UPA00060"/>
<dbReference type="Proteomes" id="UP000000643">
    <property type="component" value="Chromosome"/>
</dbReference>
<dbReference type="GO" id="GO:0005829">
    <property type="term" value="C:cytosol"/>
    <property type="evidence" value="ECO:0007669"/>
    <property type="project" value="TreeGrafter"/>
</dbReference>
<dbReference type="GO" id="GO:0051539">
    <property type="term" value="F:4 iron, 4 sulfur cluster binding"/>
    <property type="evidence" value="ECO:0007669"/>
    <property type="project" value="UniProtKB-KW"/>
</dbReference>
<dbReference type="GO" id="GO:0016830">
    <property type="term" value="F:carbon-carbon lyase activity"/>
    <property type="evidence" value="ECO:0007669"/>
    <property type="project" value="InterPro"/>
</dbReference>
<dbReference type="GO" id="GO:0008270">
    <property type="term" value="F:zinc ion binding"/>
    <property type="evidence" value="ECO:0007669"/>
    <property type="project" value="UniProtKB-UniRule"/>
</dbReference>
<dbReference type="GO" id="GO:0009228">
    <property type="term" value="P:thiamine biosynthetic process"/>
    <property type="evidence" value="ECO:0007669"/>
    <property type="project" value="UniProtKB-KW"/>
</dbReference>
<dbReference type="GO" id="GO:0009229">
    <property type="term" value="P:thiamine diphosphate biosynthetic process"/>
    <property type="evidence" value="ECO:0007669"/>
    <property type="project" value="UniProtKB-UniRule"/>
</dbReference>
<dbReference type="FunFam" id="3.20.20.540:FF:000001">
    <property type="entry name" value="Phosphomethylpyrimidine synthase"/>
    <property type="match status" value="1"/>
</dbReference>
<dbReference type="Gene3D" id="6.10.250.620">
    <property type="match status" value="1"/>
</dbReference>
<dbReference type="Gene3D" id="3.20.20.540">
    <property type="entry name" value="Radical SAM ThiC family, central domain"/>
    <property type="match status" value="1"/>
</dbReference>
<dbReference type="HAMAP" id="MF_00089">
    <property type="entry name" value="ThiC"/>
    <property type="match status" value="1"/>
</dbReference>
<dbReference type="InterPro" id="IPR037509">
    <property type="entry name" value="ThiC"/>
</dbReference>
<dbReference type="InterPro" id="IPR025747">
    <property type="entry name" value="ThiC-associated_dom"/>
</dbReference>
<dbReference type="InterPro" id="IPR038521">
    <property type="entry name" value="ThiC/Bza_core_dom"/>
</dbReference>
<dbReference type="InterPro" id="IPR002817">
    <property type="entry name" value="ThiC/BzaA/B"/>
</dbReference>
<dbReference type="NCBIfam" id="NF006763">
    <property type="entry name" value="PRK09284.1"/>
    <property type="match status" value="1"/>
</dbReference>
<dbReference type="NCBIfam" id="NF009895">
    <property type="entry name" value="PRK13352.1"/>
    <property type="match status" value="1"/>
</dbReference>
<dbReference type="NCBIfam" id="TIGR00190">
    <property type="entry name" value="thiC"/>
    <property type="match status" value="1"/>
</dbReference>
<dbReference type="PANTHER" id="PTHR30557:SF1">
    <property type="entry name" value="PHOSPHOMETHYLPYRIMIDINE SYNTHASE, CHLOROPLASTIC"/>
    <property type="match status" value="1"/>
</dbReference>
<dbReference type="PANTHER" id="PTHR30557">
    <property type="entry name" value="THIAMINE BIOSYNTHESIS PROTEIN THIC"/>
    <property type="match status" value="1"/>
</dbReference>
<dbReference type="Pfam" id="PF13667">
    <property type="entry name" value="ThiC-associated"/>
    <property type="match status" value="1"/>
</dbReference>
<dbReference type="Pfam" id="PF01964">
    <property type="entry name" value="ThiC_Rad_SAM"/>
    <property type="match status" value="1"/>
</dbReference>
<dbReference type="SFLD" id="SFLDF00407">
    <property type="entry name" value="phosphomethylpyrimidine_syntha"/>
    <property type="match status" value="1"/>
</dbReference>
<dbReference type="SFLD" id="SFLDG01114">
    <property type="entry name" value="phosphomethylpyrimidine_syntha"/>
    <property type="match status" value="1"/>
</dbReference>
<dbReference type="SFLD" id="SFLDS00113">
    <property type="entry name" value="Radical_SAM_Phosphomethylpyrim"/>
    <property type="match status" value="1"/>
</dbReference>
<organism>
    <name type="scientific">Bartonella bacilliformis (strain ATCC 35685 / KC583 / Herrer 020/F12,63)</name>
    <dbReference type="NCBI Taxonomy" id="360095"/>
    <lineage>
        <taxon>Bacteria</taxon>
        <taxon>Pseudomonadati</taxon>
        <taxon>Pseudomonadota</taxon>
        <taxon>Alphaproteobacteria</taxon>
        <taxon>Hyphomicrobiales</taxon>
        <taxon>Bartonellaceae</taxon>
        <taxon>Bartonella</taxon>
    </lineage>
</organism>
<sequence length="611" mass="68453">MQKHTPSVSCSPFPSSHKFYQQSLLFPNVRVPLRKILLTDGSGESPFNVYDTSGPYTDENVIIDITKGLPAIRIPWLSERADTESYPARLVKPEDNGFTHGKDLTPVFEKKRPILRSKNGKSITQMTYARAGIITAEMEYVAIRENEGLIEKNKQHTTSSKAFDASIPEVYTAEFVRNEIACGRAIIPQNINHPECEPMIIGRNFRVKINANIGNSAVTSSMAEEVEKMVWAIRWGADTVMDLSTGRNIHNIREWIIRNSPVPIGTVPIYQALEKVHGIAENLTWDIFRDTLIEQAEQGVDYFTIHAGLKLAFIPLTIDRTTGIVSRGGSIIAKWCLHHHKENFLYEHFDEICDIAHTYDVSLSLGDGLRPGSIADANDEAQFAELKTLGELTQIAWEKNVQTMIEGPGHVPMHKIKENMDQQLALCNEAPFYTLGPLTTDIAPGYDHITSAIGAAMIGWFGTAMLCYVTPKEHLGLPDKNDVKTGVITYKIAAHAADLAKGLPRAQLRDNTLSRARFDFRWHDQFNLSLDPDTARAFHDETMPKEAHKLAHFCSMCGPKFCSMRISHDIRDAVAIKKTRDEGMAAMAEKYQQNGDLYMKVMPSIKETVDD</sequence>